<protein>
    <recommendedName>
        <fullName>Prokaryotic ubiquitin-like protein Pup</fullName>
    </recommendedName>
    <alternativeName>
        <fullName>Bacterial ubiquitin-like modifier</fullName>
    </alternativeName>
</protein>
<keyword id="KW-1017">Isopeptide bond</keyword>
<keyword id="KW-1185">Reference proteome</keyword>
<keyword id="KW-0833">Ubl conjugation pathway</keyword>
<sequence>MPQKFEQMQSAEQKHDEDETIAQAGTQIDDTVDALDAVLDDIESVLESNAEEYVGSFVQKGGE</sequence>
<accession>P0CG91</accession>
<gene>
    <name type="primary">pup</name>
    <name type="ordered locus">BAD_0548.1</name>
</gene>
<proteinExistence type="inferred from homology"/>
<evidence type="ECO:0000250" key="1"/>
<evidence type="ECO:0000256" key="2">
    <source>
        <dbReference type="SAM" id="MobiDB-lite"/>
    </source>
</evidence>
<evidence type="ECO:0000305" key="3"/>
<comment type="function">
    <text evidence="1">Protein modifier that is covalently attached to lysine residues of substrate proteins, thereby targeting them for proteasomal degradation. The tagging system is termed pupylation (By similarity).</text>
</comment>
<comment type="pathway">
    <text>Protein degradation; proteasomal Pup-dependent pathway.</text>
</comment>
<comment type="subunit">
    <text evidence="1">Strongly interacts with the proteasome-associated ATPase ARC through a hydrophobic interface; the interacting region of Pup lies in its C-terminal half. There is one Pup binding site per ARC hexamer ring (By similarity).</text>
</comment>
<comment type="domain">
    <text evidence="1">The N-terminal unstructured half of Pup provides a signal required to initiate unfolding and degradation by the proteasome but is not needed for pupylation, while the C-terminal helical half of Pup interacts with ARC to target proteins to the proteasome.</text>
</comment>
<comment type="similarity">
    <text evidence="3">Belongs to the prokaryotic ubiquitin-like protein family.</text>
</comment>
<name>PUP_BIFAA</name>
<reference key="1">
    <citation type="submission" date="2006-12" db="EMBL/GenBank/DDBJ databases">
        <title>Bifidobacterium adolescentis complete genome sequence.</title>
        <authorList>
            <person name="Suzuki T."/>
            <person name="Tsuda Y."/>
            <person name="Kanou N."/>
            <person name="Inoue T."/>
            <person name="Kumazaki K."/>
            <person name="Nagano S."/>
            <person name="Hirai S."/>
            <person name="Tanaka K."/>
            <person name="Watanabe K."/>
        </authorList>
    </citation>
    <scope>NUCLEOTIDE SEQUENCE [LARGE SCALE GENOMIC DNA]</scope>
    <source>
        <strain>ATCC 15703 / DSM 20083 / NCTC 11814 / E194a</strain>
    </source>
</reference>
<feature type="chain" id="PRO_0000395995" description="Prokaryotic ubiquitin-like protein Pup">
    <location>
        <begin position="1"/>
        <end position="63"/>
    </location>
</feature>
<feature type="region of interest" description="Disordered" evidence="2">
    <location>
        <begin position="1"/>
        <end position="28"/>
    </location>
</feature>
<feature type="region of interest" description="ARC ATPase binding" evidence="1">
    <location>
        <begin position="19"/>
        <end position="57"/>
    </location>
</feature>
<feature type="compositionally biased region" description="Polar residues" evidence="2">
    <location>
        <begin position="1"/>
        <end position="11"/>
    </location>
</feature>
<feature type="cross-link" description="Isoglutamyl lysine isopeptide (Glu-Lys) (interchain with K-? in acceptor proteins)" evidence="1">
    <location>
        <position position="63"/>
    </location>
</feature>
<organism>
    <name type="scientific">Bifidobacterium adolescentis (strain ATCC 15703 / DSM 20083 / NCTC 11814 / E194a)</name>
    <dbReference type="NCBI Taxonomy" id="367928"/>
    <lineage>
        <taxon>Bacteria</taxon>
        <taxon>Bacillati</taxon>
        <taxon>Actinomycetota</taxon>
        <taxon>Actinomycetes</taxon>
        <taxon>Bifidobacteriales</taxon>
        <taxon>Bifidobacteriaceae</taxon>
        <taxon>Bifidobacterium</taxon>
    </lineage>
</organism>
<dbReference type="EMBL" id="AP009256">
    <property type="status" value="NOT_ANNOTATED_CDS"/>
    <property type="molecule type" value="Genomic_DNA"/>
</dbReference>
<dbReference type="RefSeq" id="WP_021913941.1">
    <property type="nucleotide sequence ID" value="NZ_CAXVNC010000001.1"/>
</dbReference>
<dbReference type="SMR" id="P0CG91"/>
<dbReference type="PaxDb" id="1680-BADO_0562"/>
<dbReference type="UniPathway" id="UPA00997"/>
<dbReference type="Proteomes" id="UP000008702">
    <property type="component" value="Chromosome"/>
</dbReference>
<dbReference type="GO" id="GO:0070628">
    <property type="term" value="F:proteasome binding"/>
    <property type="evidence" value="ECO:0007669"/>
    <property type="project" value="UniProtKB-UniRule"/>
</dbReference>
<dbReference type="GO" id="GO:0031386">
    <property type="term" value="F:protein tag activity"/>
    <property type="evidence" value="ECO:0007669"/>
    <property type="project" value="UniProtKB-UniRule"/>
</dbReference>
<dbReference type="GO" id="GO:0019941">
    <property type="term" value="P:modification-dependent protein catabolic process"/>
    <property type="evidence" value="ECO:0007669"/>
    <property type="project" value="UniProtKB-UniRule"/>
</dbReference>
<dbReference type="GO" id="GO:0010498">
    <property type="term" value="P:proteasomal protein catabolic process"/>
    <property type="evidence" value="ECO:0007669"/>
    <property type="project" value="UniProtKB-UniRule"/>
</dbReference>
<dbReference type="GO" id="GO:0070490">
    <property type="term" value="P:protein pupylation"/>
    <property type="evidence" value="ECO:0007669"/>
    <property type="project" value="UniProtKB-UniRule"/>
</dbReference>
<dbReference type="HAMAP" id="MF_02106">
    <property type="entry name" value="Pup"/>
    <property type="match status" value="1"/>
</dbReference>
<dbReference type="InterPro" id="IPR008515">
    <property type="entry name" value="Ubiquitin-like_Pup"/>
</dbReference>
<dbReference type="NCBIfam" id="TIGR03687">
    <property type="entry name" value="pupylate_cterm"/>
    <property type="match status" value="1"/>
</dbReference>
<dbReference type="Pfam" id="PF05639">
    <property type="entry name" value="Pup"/>
    <property type="match status" value="1"/>
</dbReference>